<comment type="function">
    <text evidence="1 2">Antibacterial peptide with amphipathic alpha-helical structure. Active against E.coli ATCC 25726 (MIC=4-5 uM) and S.aureus ATCC 25923 (MIC=8-10 uM). Has a weak hemolytic activity on human erythrocytes (LC(50)=150-160 uM).</text>
</comment>
<comment type="subcellular location">
    <subcellularLocation>
        <location evidence="1">Secreted</location>
    </subcellularLocation>
    <subcellularLocation>
        <location evidence="5">Target cell membrane</location>
    </subcellularLocation>
</comment>
<comment type="tissue specificity">
    <text evidence="6">Expressed by the skin glands.</text>
</comment>
<comment type="domain">
    <text evidence="2">The structure is characterized by a full length helix-turn-helix conformation between residues Ile-2-Leu-21, Leu-22-Leu-25 and Lys-26-Thr-30, respectively.</text>
</comment>
<comment type="mass spectrometry" mass="3245.9" method="MALDI" evidence="1"/>
<comment type="similarity">
    <text evidence="5">Belongs to the frog skin active peptide (FSAP) family. Ranatuerin subfamily.</text>
</comment>
<feature type="chain" id="PRO_0000457123" description="Ranatuerin-2CSa">
    <location>
        <begin position="1"/>
        <end position="32"/>
    </location>
</feature>
<feature type="disulfide bond" evidence="2 8">
    <location>
        <begin position="27"/>
        <end position="32"/>
    </location>
</feature>
<feature type="helix" evidence="9">
    <location>
        <begin position="2"/>
        <end position="9"/>
    </location>
</feature>
<feature type="helix" evidence="9">
    <location>
        <begin position="10"/>
        <end position="12"/>
    </location>
</feature>
<feature type="helix" evidence="9">
    <location>
        <begin position="13"/>
        <end position="21"/>
    </location>
</feature>
<feature type="turn" evidence="9">
    <location>
        <begin position="22"/>
        <end position="25"/>
    </location>
</feature>
<feature type="helix" evidence="9">
    <location>
        <begin position="26"/>
        <end position="30"/>
    </location>
</feature>
<dbReference type="PDB" id="2K10">
    <property type="method" value="NMR"/>
    <property type="chains" value="A=1-32"/>
</dbReference>
<dbReference type="PDBsum" id="2K10"/>
<dbReference type="SMR" id="V9GZ92"/>
<dbReference type="EvolutionaryTrace" id="V9GZ92"/>
<dbReference type="GO" id="GO:0005576">
    <property type="term" value="C:extracellular region"/>
    <property type="evidence" value="ECO:0007669"/>
    <property type="project" value="UniProtKB-SubCell"/>
</dbReference>
<dbReference type="GO" id="GO:0016020">
    <property type="term" value="C:membrane"/>
    <property type="evidence" value="ECO:0007669"/>
    <property type="project" value="UniProtKB-KW"/>
</dbReference>
<dbReference type="GO" id="GO:0044218">
    <property type="term" value="C:other organism cell membrane"/>
    <property type="evidence" value="ECO:0007669"/>
    <property type="project" value="UniProtKB-KW"/>
</dbReference>
<dbReference type="GO" id="GO:0042742">
    <property type="term" value="P:defense response to bacterium"/>
    <property type="evidence" value="ECO:0007669"/>
    <property type="project" value="UniProtKB-KW"/>
</dbReference>
<dbReference type="GO" id="GO:0045087">
    <property type="term" value="P:innate immune response"/>
    <property type="evidence" value="ECO:0007669"/>
    <property type="project" value="UniProtKB-KW"/>
</dbReference>
<dbReference type="InterPro" id="IPR012521">
    <property type="entry name" value="Antimicrobial_frog_2"/>
</dbReference>
<dbReference type="Pfam" id="PF08023">
    <property type="entry name" value="Antimicrobial_2"/>
    <property type="match status" value="1"/>
</dbReference>
<protein>
    <recommendedName>
        <fullName evidence="3 4">Ranatuerin-2CSa</fullName>
    </recommendedName>
</protein>
<evidence type="ECO:0000269" key="1">
    <source>
    </source>
</evidence>
<evidence type="ECO:0000269" key="2">
    <source>
    </source>
</evidence>
<evidence type="ECO:0000303" key="3">
    <source>
    </source>
</evidence>
<evidence type="ECO:0000303" key="4">
    <source>
    </source>
</evidence>
<evidence type="ECO:0000305" key="5"/>
<evidence type="ECO:0000305" key="6">
    <source>
    </source>
</evidence>
<evidence type="ECO:0000312" key="7">
    <source>
        <dbReference type="PDB" id="2K10"/>
    </source>
</evidence>
<evidence type="ECO:0007744" key="8">
    <source>
        <dbReference type="PDB" id="2K10"/>
    </source>
</evidence>
<evidence type="ECO:0007829" key="9">
    <source>
        <dbReference type="PDB" id="2K10"/>
    </source>
</evidence>
<accession>V9GZ92</accession>
<reference key="1">
    <citation type="journal article" date="2007" name="Peptides">
        <title>Peptide defenses of the Cascades frog Rana cascadae: implications for the evolutionary history of frogs of the Amerana species group.</title>
        <authorList>
            <person name="Conlon J.M."/>
            <person name="Al-Dhaheri A."/>
            <person name="Al-Mutawa E."/>
            <person name="Al-Kharrge R."/>
            <person name="Ahmed E."/>
            <person name="Kolodziejek J."/>
            <person name="Nowotny N."/>
            <person name="Nielsen P.F."/>
            <person name="Davidson C."/>
        </authorList>
    </citation>
    <scope>PROTEIN SEQUENCE</scope>
    <scope>SUBCELLULAR LOCATION</scope>
    <scope>FUNCTION</scope>
    <scope>MASS SPECTROMETRY</scope>
    <source>
        <tissue>Skin secretion</tissue>
    </source>
</reference>
<reference evidence="7" key="2">
    <citation type="journal article" date="2008" name="Biochim. Biophys. Acta">
        <title>Conformational analysis of the broad-spectrum antibacterial peptide, ranatuerin-2CSa: identification of a full length helix-turn-helix motif.</title>
        <authorList>
            <person name="Subasinghage A.P."/>
            <person name="Conlon J.M."/>
            <person name="Hewage C.M."/>
        </authorList>
    </citation>
    <scope>STRUCTURE BY NMR</scope>
    <scope>FUNCTION</scope>
    <scope>SYNTHESIS</scope>
    <scope>DISULFIDE BOND</scope>
</reference>
<sequence length="32" mass="3250">GILSSFKGVAKGVAKDLAGKLLETLKCKITGC</sequence>
<proteinExistence type="evidence at protein level"/>
<name>RN2A_RANCS</name>
<organism>
    <name type="scientific">Rana cascadae</name>
    <name type="common">Cascades frog</name>
    <dbReference type="NCBI Taxonomy" id="160497"/>
    <lineage>
        <taxon>Eukaryota</taxon>
        <taxon>Metazoa</taxon>
        <taxon>Chordata</taxon>
        <taxon>Craniata</taxon>
        <taxon>Vertebrata</taxon>
        <taxon>Euteleostomi</taxon>
        <taxon>Amphibia</taxon>
        <taxon>Batrachia</taxon>
        <taxon>Anura</taxon>
        <taxon>Neobatrachia</taxon>
        <taxon>Ranoidea</taxon>
        <taxon>Ranidae</taxon>
        <taxon>Rana</taxon>
        <taxon>Rana</taxon>
    </lineage>
</organism>
<keyword id="KW-0002">3D-structure</keyword>
<keyword id="KW-0878">Amphibian defense peptide</keyword>
<keyword id="KW-0044">Antibiotic</keyword>
<keyword id="KW-0929">Antimicrobial</keyword>
<keyword id="KW-0903">Direct protein sequencing</keyword>
<keyword id="KW-1015">Disulfide bond</keyword>
<keyword id="KW-0391">Immunity</keyword>
<keyword id="KW-0399">Innate immunity</keyword>
<keyword id="KW-0472">Membrane</keyword>
<keyword id="KW-0964">Secreted</keyword>
<keyword id="KW-1052">Target cell membrane</keyword>
<keyword id="KW-1053">Target membrane</keyword>